<name>LEU3_SYNY3</name>
<accession>P73960</accession>
<comment type="function">
    <text evidence="1">Catalyzes the oxidation of 3-carboxy-2-hydroxy-4-methylpentanoate (3-isopropylmalate) to 3-carboxy-4-methyl-2-oxopentanoate. The product decarboxylates to 4-methyl-2 oxopentanoate (By similarity).</text>
</comment>
<comment type="catalytic activity">
    <reaction>
        <text>(2R,3S)-3-isopropylmalate + NAD(+) = 4-methyl-2-oxopentanoate + CO2 + NADH</text>
        <dbReference type="Rhea" id="RHEA:32271"/>
        <dbReference type="ChEBI" id="CHEBI:16526"/>
        <dbReference type="ChEBI" id="CHEBI:17865"/>
        <dbReference type="ChEBI" id="CHEBI:35121"/>
        <dbReference type="ChEBI" id="CHEBI:57540"/>
        <dbReference type="ChEBI" id="CHEBI:57945"/>
        <dbReference type="EC" id="1.1.1.85"/>
    </reaction>
</comment>
<comment type="cofactor">
    <cofactor evidence="1">
        <name>Mg(2+)</name>
        <dbReference type="ChEBI" id="CHEBI:18420"/>
    </cofactor>
    <cofactor evidence="1">
        <name>Mn(2+)</name>
        <dbReference type="ChEBI" id="CHEBI:29035"/>
    </cofactor>
    <text evidence="1">Binds 1 Mg(2+) or Mn(2+) ion per subunit.</text>
</comment>
<comment type="pathway">
    <text>Amino-acid biosynthesis; L-leucine biosynthesis; L-leucine from 3-methyl-2-oxobutanoate: step 3/4.</text>
</comment>
<comment type="subunit">
    <text evidence="1">Homodimer.</text>
</comment>
<comment type="subcellular location">
    <subcellularLocation>
        <location evidence="1">Cytoplasm</location>
    </subcellularLocation>
</comment>
<comment type="similarity">
    <text evidence="2">Belongs to the isocitrate and isopropylmalate dehydrogenases family. LeuB type 1 subfamily.</text>
</comment>
<protein>
    <recommendedName>
        <fullName>3-isopropylmalate dehydrogenase</fullName>
        <ecNumber>1.1.1.85</ecNumber>
    </recommendedName>
    <alternativeName>
        <fullName>3-IPM-DH</fullName>
    </alternativeName>
    <alternativeName>
        <fullName>Beta-IPM dehydrogenase</fullName>
        <shortName>IMDH</shortName>
    </alternativeName>
</protein>
<gene>
    <name type="primary">leuB</name>
    <name type="ordered locus">slr1517</name>
</gene>
<sequence>MSQTYNVTLLPGDGIGPEIMAVAVAVLGKVADQFGFAFNFQEALIGGAAIDATGQPLPEATLAQAKDSDAVLLAAIGGYAWDNLPRSQRPETGLLAIREGLGLFANLRPATIFPQLIDASSLKREVVEGVDIMVVRELTGGIYFGKPKGIFETETGEKRGVNTMAYTVGEIDRIAKVAFETARKRRGQLCSVDKANVLDVSQLWRDRVMAIAVDYPDVELSHLYVDNAAMQLVRSPRQFDTIVTGNLFGDILSDIAAMLTGSIGMLPSASLGSDGPGLFEPVHGSAPDIAGQDKANPLAQVLSAAMMLRYGLDQPQAADRLEDAVKKVLEQGYRTGDILSPGTQLVGCRQMGEQLLSILDEM</sequence>
<proteinExistence type="inferred from homology"/>
<reference key="1">
    <citation type="journal article" date="1996" name="DNA Res.">
        <title>Sequence analysis of the genome of the unicellular cyanobacterium Synechocystis sp. strain PCC6803. II. Sequence determination of the entire genome and assignment of potential protein-coding regions.</title>
        <authorList>
            <person name="Kaneko T."/>
            <person name="Sato S."/>
            <person name="Kotani H."/>
            <person name="Tanaka A."/>
            <person name="Asamizu E."/>
            <person name="Nakamura Y."/>
            <person name="Miyajima N."/>
            <person name="Hirosawa M."/>
            <person name="Sugiura M."/>
            <person name="Sasamoto S."/>
            <person name="Kimura T."/>
            <person name="Hosouchi T."/>
            <person name="Matsuno A."/>
            <person name="Muraki A."/>
            <person name="Nakazaki N."/>
            <person name="Naruo K."/>
            <person name="Okumura S."/>
            <person name="Shimpo S."/>
            <person name="Takeuchi C."/>
            <person name="Wada T."/>
            <person name="Watanabe A."/>
            <person name="Yamada M."/>
            <person name="Yasuda M."/>
            <person name="Tabata S."/>
        </authorList>
    </citation>
    <scope>NUCLEOTIDE SEQUENCE [LARGE SCALE GENOMIC DNA]</scope>
    <source>
        <strain>ATCC 27184 / PCC 6803 / Kazusa</strain>
    </source>
</reference>
<evidence type="ECO:0000250" key="1"/>
<evidence type="ECO:0000305" key="2"/>
<feature type="chain" id="PRO_0000083769" description="3-isopropylmalate dehydrogenase">
    <location>
        <begin position="1"/>
        <end position="362"/>
    </location>
</feature>
<feature type="binding site" evidence="1">
    <location>
        <begin position="78"/>
        <end position="91"/>
    </location>
    <ligand>
        <name>NAD(+)</name>
        <dbReference type="ChEBI" id="CHEBI:57540"/>
    </ligand>
</feature>
<feature type="binding site" evidence="1">
    <location>
        <position position="98"/>
    </location>
    <ligand>
        <name>substrate</name>
    </ligand>
</feature>
<feature type="binding site" evidence="1">
    <location>
        <position position="108"/>
    </location>
    <ligand>
        <name>substrate</name>
    </ligand>
</feature>
<feature type="binding site" evidence="1">
    <location>
        <position position="136"/>
    </location>
    <ligand>
        <name>substrate</name>
    </ligand>
</feature>
<feature type="binding site" evidence="1">
    <location>
        <position position="226"/>
    </location>
    <ligand>
        <name>Mg(2+)</name>
        <dbReference type="ChEBI" id="CHEBI:18420"/>
    </ligand>
</feature>
<feature type="binding site" evidence="1">
    <location>
        <position position="226"/>
    </location>
    <ligand>
        <name>substrate</name>
    </ligand>
</feature>
<feature type="binding site" evidence="1">
    <location>
        <position position="250"/>
    </location>
    <ligand>
        <name>Mg(2+)</name>
        <dbReference type="ChEBI" id="CHEBI:18420"/>
    </ligand>
</feature>
<feature type="binding site" evidence="1">
    <location>
        <position position="254"/>
    </location>
    <ligand>
        <name>Mg(2+)</name>
        <dbReference type="ChEBI" id="CHEBI:18420"/>
    </ligand>
</feature>
<feature type="binding site" evidence="1">
    <location>
        <begin position="284"/>
        <end position="296"/>
    </location>
    <ligand>
        <name>NAD(+)</name>
        <dbReference type="ChEBI" id="CHEBI:57540"/>
    </ligand>
</feature>
<feature type="site" description="Important for catalysis" evidence="1">
    <location>
        <position position="143"/>
    </location>
</feature>
<feature type="site" description="Important for catalysis" evidence="1">
    <location>
        <position position="194"/>
    </location>
</feature>
<organism>
    <name type="scientific">Synechocystis sp. (strain ATCC 27184 / PCC 6803 / Kazusa)</name>
    <dbReference type="NCBI Taxonomy" id="1111708"/>
    <lineage>
        <taxon>Bacteria</taxon>
        <taxon>Bacillati</taxon>
        <taxon>Cyanobacteriota</taxon>
        <taxon>Cyanophyceae</taxon>
        <taxon>Synechococcales</taxon>
        <taxon>Merismopediaceae</taxon>
        <taxon>Synechocystis</taxon>
    </lineage>
</organism>
<dbReference type="EC" id="1.1.1.85"/>
<dbReference type="EMBL" id="BA000022">
    <property type="protein sequence ID" value="BAA18028.1"/>
    <property type="molecule type" value="Genomic_DNA"/>
</dbReference>
<dbReference type="PIR" id="S75467">
    <property type="entry name" value="S75467"/>
</dbReference>
<dbReference type="SMR" id="P73960"/>
<dbReference type="FunCoup" id="P73960">
    <property type="interactions" value="369"/>
</dbReference>
<dbReference type="STRING" id="1148.gene:10498898"/>
<dbReference type="PaxDb" id="1148-1653112"/>
<dbReference type="EnsemblBacteria" id="BAA18028">
    <property type="protein sequence ID" value="BAA18028"/>
    <property type="gene ID" value="BAA18028"/>
</dbReference>
<dbReference type="KEGG" id="syn:slr1517"/>
<dbReference type="eggNOG" id="COG0473">
    <property type="taxonomic scope" value="Bacteria"/>
</dbReference>
<dbReference type="InParanoid" id="P73960"/>
<dbReference type="PhylomeDB" id="P73960"/>
<dbReference type="UniPathway" id="UPA00048">
    <property type="reaction ID" value="UER00072"/>
</dbReference>
<dbReference type="Proteomes" id="UP000001425">
    <property type="component" value="Chromosome"/>
</dbReference>
<dbReference type="GO" id="GO:0005829">
    <property type="term" value="C:cytosol"/>
    <property type="evidence" value="ECO:0000318"/>
    <property type="project" value="GO_Central"/>
</dbReference>
<dbReference type="GO" id="GO:0003862">
    <property type="term" value="F:3-isopropylmalate dehydrogenase activity"/>
    <property type="evidence" value="ECO:0000318"/>
    <property type="project" value="GO_Central"/>
</dbReference>
<dbReference type="GO" id="GO:0000287">
    <property type="term" value="F:magnesium ion binding"/>
    <property type="evidence" value="ECO:0007669"/>
    <property type="project" value="InterPro"/>
</dbReference>
<dbReference type="GO" id="GO:0051287">
    <property type="term" value="F:NAD binding"/>
    <property type="evidence" value="ECO:0007669"/>
    <property type="project" value="InterPro"/>
</dbReference>
<dbReference type="GO" id="GO:0009098">
    <property type="term" value="P:L-leucine biosynthetic process"/>
    <property type="evidence" value="ECO:0000318"/>
    <property type="project" value="GO_Central"/>
</dbReference>
<dbReference type="FunFam" id="3.40.718.10:FF:000004">
    <property type="entry name" value="3-isopropylmalate dehydrogenase"/>
    <property type="match status" value="1"/>
</dbReference>
<dbReference type="Gene3D" id="3.40.718.10">
    <property type="entry name" value="Isopropylmalate Dehydrogenase"/>
    <property type="match status" value="1"/>
</dbReference>
<dbReference type="HAMAP" id="MF_01033">
    <property type="entry name" value="LeuB_type1"/>
    <property type="match status" value="1"/>
</dbReference>
<dbReference type="InterPro" id="IPR019818">
    <property type="entry name" value="IsoCit/isopropylmalate_DH_CS"/>
</dbReference>
<dbReference type="InterPro" id="IPR024084">
    <property type="entry name" value="IsoPropMal-DH-like_dom"/>
</dbReference>
<dbReference type="InterPro" id="IPR004429">
    <property type="entry name" value="Isopropylmalate_DH"/>
</dbReference>
<dbReference type="NCBIfam" id="TIGR00169">
    <property type="entry name" value="leuB"/>
    <property type="match status" value="1"/>
</dbReference>
<dbReference type="PANTHER" id="PTHR42979">
    <property type="entry name" value="3-ISOPROPYLMALATE DEHYDROGENASE"/>
    <property type="match status" value="1"/>
</dbReference>
<dbReference type="PANTHER" id="PTHR42979:SF1">
    <property type="entry name" value="3-ISOPROPYLMALATE DEHYDROGENASE"/>
    <property type="match status" value="1"/>
</dbReference>
<dbReference type="Pfam" id="PF00180">
    <property type="entry name" value="Iso_dh"/>
    <property type="match status" value="1"/>
</dbReference>
<dbReference type="SMART" id="SM01329">
    <property type="entry name" value="Iso_dh"/>
    <property type="match status" value="1"/>
</dbReference>
<dbReference type="SUPFAM" id="SSF53659">
    <property type="entry name" value="Isocitrate/Isopropylmalate dehydrogenase-like"/>
    <property type="match status" value="1"/>
</dbReference>
<dbReference type="PROSITE" id="PS00470">
    <property type="entry name" value="IDH_IMDH"/>
    <property type="match status" value="1"/>
</dbReference>
<keyword id="KW-0028">Amino-acid biosynthesis</keyword>
<keyword id="KW-0100">Branched-chain amino acid biosynthesis</keyword>
<keyword id="KW-0963">Cytoplasm</keyword>
<keyword id="KW-0432">Leucine biosynthesis</keyword>
<keyword id="KW-0460">Magnesium</keyword>
<keyword id="KW-0464">Manganese</keyword>
<keyword id="KW-0479">Metal-binding</keyword>
<keyword id="KW-0520">NAD</keyword>
<keyword id="KW-0560">Oxidoreductase</keyword>
<keyword id="KW-1185">Reference proteome</keyword>